<comment type="function">
    <text evidence="8 9">Plays a role in cell migration (PubMed:21471154). May be involved in neuron regeneration. May regulate IL2 production by T-cells.</text>
</comment>
<comment type="subcellular location">
    <subcellularLocation>
        <location evidence="1">Nucleus outer membrane</location>
    </subcellularLocation>
</comment>
<comment type="alternative products">
    <event type="alternative splicing"/>
    <isoform>
        <id>Q8IVL0-1</id>
        <name>1</name>
        <sequence type="displayed"/>
    </isoform>
    <isoform>
        <id>Q8IVL0-2</id>
        <name>2</name>
        <sequence type="described" ref="VSP_025269"/>
    </isoform>
    <isoform>
        <id>Q8IVL0-3</id>
        <name>3</name>
        <sequence type="described" ref="VSP_025268 VSP_025269"/>
    </isoform>
</comment>
<comment type="tissue specificity">
    <text evidence="5 6 7 8">Highly expressed in brain. Expressed at low levels in heart and placenta. Present in activated T-cells but not in resting T-cells (at protein level). Down-regulated in primary neuroblastoma.</text>
</comment>
<comment type="developmental stage">
    <text evidence="5">Expressed in fetal brain.</text>
</comment>
<comment type="disease">
    <text evidence="8">A chromosomal aberration disrupting NAV3 has been found in patients with Sezary syndrome (PubMed:16166283). Translocation t(12;18)(q21;q21.2) (PubMed:16166283).</text>
</comment>
<comment type="similarity">
    <text evidence="12">Belongs to the Nav/unc-53 family.</text>
</comment>
<proteinExistence type="evidence at protein level"/>
<feature type="chain" id="PRO_0000286976" description="Neuron navigator 3">
    <location>
        <begin position="1"/>
        <end position="2385"/>
    </location>
</feature>
<feature type="domain" description="Calponin-homology (CH)" evidence="3">
    <location>
        <begin position="77"/>
        <end position="184"/>
    </location>
</feature>
<feature type="region of interest" description="Disordered" evidence="4">
    <location>
        <begin position="17"/>
        <end position="38"/>
    </location>
</feature>
<feature type="region of interest" description="Disordered" evidence="4">
    <location>
        <begin position="203"/>
        <end position="625"/>
    </location>
</feature>
<feature type="region of interest" description="Disordered" evidence="4">
    <location>
        <begin position="877"/>
        <end position="1312"/>
    </location>
</feature>
<feature type="region of interest" description="Disordered" evidence="4">
    <location>
        <begin position="1351"/>
        <end position="1370"/>
    </location>
</feature>
<feature type="region of interest" description="Disordered" evidence="4">
    <location>
        <begin position="1410"/>
        <end position="1468"/>
    </location>
</feature>
<feature type="region of interest" description="Disordered" evidence="4">
    <location>
        <begin position="1650"/>
        <end position="1778"/>
    </location>
</feature>
<feature type="region of interest" description="Disordered" evidence="4">
    <location>
        <begin position="1850"/>
        <end position="1881"/>
    </location>
</feature>
<feature type="region of interest" description="Disordered" evidence="4">
    <location>
        <begin position="2360"/>
        <end position="2385"/>
    </location>
</feature>
<feature type="coiled-coil region" evidence="2">
    <location>
        <begin position="679"/>
        <end position="707"/>
    </location>
</feature>
<feature type="coiled-coil region" evidence="2">
    <location>
        <begin position="1562"/>
        <end position="1653"/>
    </location>
</feature>
<feature type="coiled-coil region" evidence="2">
    <location>
        <begin position="1794"/>
        <end position="1861"/>
    </location>
</feature>
<feature type="compositionally biased region" description="Polar residues" evidence="4">
    <location>
        <begin position="29"/>
        <end position="38"/>
    </location>
</feature>
<feature type="compositionally biased region" description="Polar residues" evidence="4">
    <location>
        <begin position="210"/>
        <end position="243"/>
    </location>
</feature>
<feature type="compositionally biased region" description="Polar residues" evidence="4">
    <location>
        <begin position="258"/>
        <end position="279"/>
    </location>
</feature>
<feature type="compositionally biased region" description="Polar residues" evidence="4">
    <location>
        <begin position="297"/>
        <end position="316"/>
    </location>
</feature>
<feature type="compositionally biased region" description="Low complexity" evidence="4">
    <location>
        <begin position="318"/>
        <end position="329"/>
    </location>
</feature>
<feature type="compositionally biased region" description="Polar residues" evidence="4">
    <location>
        <begin position="335"/>
        <end position="352"/>
    </location>
</feature>
<feature type="compositionally biased region" description="Low complexity" evidence="4">
    <location>
        <begin position="353"/>
        <end position="363"/>
    </location>
</feature>
<feature type="compositionally biased region" description="Low complexity" evidence="4">
    <location>
        <begin position="427"/>
        <end position="439"/>
    </location>
</feature>
<feature type="compositionally biased region" description="Basic and acidic residues" evidence="4">
    <location>
        <begin position="465"/>
        <end position="491"/>
    </location>
</feature>
<feature type="compositionally biased region" description="Low complexity" evidence="4">
    <location>
        <begin position="521"/>
        <end position="535"/>
    </location>
</feature>
<feature type="compositionally biased region" description="Polar residues" evidence="4">
    <location>
        <begin position="537"/>
        <end position="548"/>
    </location>
</feature>
<feature type="compositionally biased region" description="Polar residues" evidence="4">
    <location>
        <begin position="557"/>
        <end position="567"/>
    </location>
</feature>
<feature type="compositionally biased region" description="Polar residues" evidence="4">
    <location>
        <begin position="591"/>
        <end position="625"/>
    </location>
</feature>
<feature type="compositionally biased region" description="Low complexity" evidence="4">
    <location>
        <begin position="882"/>
        <end position="895"/>
    </location>
</feature>
<feature type="compositionally biased region" description="Polar residues" evidence="4">
    <location>
        <begin position="896"/>
        <end position="925"/>
    </location>
</feature>
<feature type="compositionally biased region" description="Basic and acidic residues" evidence="4">
    <location>
        <begin position="942"/>
        <end position="959"/>
    </location>
</feature>
<feature type="compositionally biased region" description="Polar residues" evidence="4">
    <location>
        <begin position="979"/>
        <end position="988"/>
    </location>
</feature>
<feature type="compositionally biased region" description="Basic and acidic residues" evidence="4">
    <location>
        <begin position="1014"/>
        <end position="1026"/>
    </location>
</feature>
<feature type="compositionally biased region" description="Low complexity" evidence="4">
    <location>
        <begin position="1074"/>
        <end position="1092"/>
    </location>
</feature>
<feature type="compositionally biased region" description="Low complexity" evidence="4">
    <location>
        <begin position="1157"/>
        <end position="1170"/>
    </location>
</feature>
<feature type="compositionally biased region" description="Polar residues" evidence="4">
    <location>
        <begin position="1187"/>
        <end position="1196"/>
    </location>
</feature>
<feature type="compositionally biased region" description="Low complexity" evidence="4">
    <location>
        <begin position="1206"/>
        <end position="1226"/>
    </location>
</feature>
<feature type="compositionally biased region" description="Low complexity" evidence="4">
    <location>
        <begin position="1253"/>
        <end position="1263"/>
    </location>
</feature>
<feature type="compositionally biased region" description="Polar residues" evidence="4">
    <location>
        <begin position="1264"/>
        <end position="1289"/>
    </location>
</feature>
<feature type="compositionally biased region" description="Gly residues" evidence="4">
    <location>
        <begin position="1296"/>
        <end position="1305"/>
    </location>
</feature>
<feature type="compositionally biased region" description="Basic and acidic residues" evidence="4">
    <location>
        <begin position="1436"/>
        <end position="1445"/>
    </location>
</feature>
<feature type="compositionally biased region" description="Polar residues" evidence="4">
    <location>
        <begin position="1446"/>
        <end position="1462"/>
    </location>
</feature>
<feature type="compositionally biased region" description="Low complexity" evidence="4">
    <location>
        <begin position="1672"/>
        <end position="1689"/>
    </location>
</feature>
<feature type="compositionally biased region" description="Polar residues" evidence="4">
    <location>
        <begin position="1701"/>
        <end position="1714"/>
    </location>
</feature>
<feature type="compositionally biased region" description="Low complexity" evidence="4">
    <location>
        <begin position="1867"/>
        <end position="1881"/>
    </location>
</feature>
<feature type="modified residue" description="Phosphoserine" evidence="13">
    <location>
        <position position="1459"/>
    </location>
</feature>
<feature type="modified residue" description="Phosphoserine" evidence="13">
    <location>
        <position position="1463"/>
    </location>
</feature>
<feature type="splice variant" id="VSP_025268" description="In isoform 3." evidence="10">
    <location>
        <begin position="1250"/>
        <end position="1426"/>
    </location>
</feature>
<feature type="splice variant" id="VSP_025269" description="In isoform 2 and isoform 3." evidence="10 11">
    <location>
        <begin position="1767"/>
        <end position="1788"/>
    </location>
</feature>
<feature type="sequence variant" id="VAR_032249" description="In dbSNP:rs10735309." evidence="7">
    <original>T</original>
    <variation>A</variation>
    <location>
        <position position="45"/>
    </location>
</feature>
<feature type="sequence variant" id="VAR_032250" description="In dbSNP:rs34195711.">
    <original>S</original>
    <variation>W</variation>
    <location>
        <position position="210"/>
    </location>
</feature>
<feature type="sequence variant" id="VAR_032251" description="In a patient with Sezary syndrome; dbSNP:rs2140012282." evidence="8">
    <original>E</original>
    <variation>K</variation>
    <location>
        <position position="2200"/>
    </location>
</feature>
<feature type="sequence conflict" description="In Ref. 1; CAD32554." evidence="12" ref="1">
    <original>D</original>
    <variation>G</variation>
    <location>
        <position position="677"/>
    </location>
</feature>
<feature type="sequence conflict" description="In Ref. 3; AAM73757." evidence="12" ref="3">
    <original>L</original>
    <variation>V</variation>
    <location>
        <position position="924"/>
    </location>
</feature>
<name>NAV3_HUMAN</name>
<dbReference type="EMBL" id="AJ488201">
    <property type="protein sequence ID" value="CAD32554.1"/>
    <property type="molecule type" value="mRNA"/>
</dbReference>
<dbReference type="EMBL" id="AC073571">
    <property type="status" value="NOT_ANNOTATED_CDS"/>
    <property type="molecule type" value="Genomic_DNA"/>
</dbReference>
<dbReference type="EMBL" id="AC073608">
    <property type="status" value="NOT_ANNOTATED_CDS"/>
    <property type="molecule type" value="Genomic_DNA"/>
</dbReference>
<dbReference type="EMBL" id="AC078822">
    <property type="status" value="NOT_ANNOTATED_CDS"/>
    <property type="molecule type" value="Genomic_DNA"/>
</dbReference>
<dbReference type="EMBL" id="AC090020">
    <property type="status" value="NOT_ANNOTATED_CDS"/>
    <property type="molecule type" value="Genomic_DNA"/>
</dbReference>
<dbReference type="EMBL" id="AC138331">
    <property type="status" value="NOT_ANNOTATED_CDS"/>
    <property type="molecule type" value="Genomic_DNA"/>
</dbReference>
<dbReference type="EMBL" id="AF397731">
    <property type="protein sequence ID" value="AAM73757.1"/>
    <property type="molecule type" value="mRNA"/>
</dbReference>
<dbReference type="EMBL" id="AB023155">
    <property type="protein sequence ID" value="BAA76782.2"/>
    <property type="molecule type" value="mRNA"/>
</dbReference>
<dbReference type="CCDS" id="CCDS41815.1">
    <molecule id="Q8IVL0-2"/>
</dbReference>
<dbReference type="CCDS" id="CCDS66432.1">
    <molecule id="Q8IVL0-1"/>
</dbReference>
<dbReference type="RefSeq" id="NP_001019554.1">
    <molecule id="Q8IVL0-1"/>
    <property type="nucleotide sequence ID" value="NM_001024383.2"/>
</dbReference>
<dbReference type="RefSeq" id="NP_055718.4">
    <molecule id="Q8IVL0-2"/>
    <property type="nucleotide sequence ID" value="NM_014903.5"/>
</dbReference>
<dbReference type="RefSeq" id="XP_011537246.1">
    <molecule id="Q8IVL0-3"/>
    <property type="nucleotide sequence ID" value="XM_011538944.4"/>
</dbReference>
<dbReference type="SMR" id="Q8IVL0"/>
<dbReference type="BioGRID" id="124604">
    <property type="interactions" value="30"/>
</dbReference>
<dbReference type="FunCoup" id="Q8IVL0">
    <property type="interactions" value="101"/>
</dbReference>
<dbReference type="IntAct" id="Q8IVL0">
    <property type="interactions" value="16"/>
</dbReference>
<dbReference type="MINT" id="Q8IVL0"/>
<dbReference type="STRING" id="9606.ENSP00000381007"/>
<dbReference type="GlyConnect" id="2059">
    <property type="glycosylation" value="1 N-Linked glycan (1 site)"/>
</dbReference>
<dbReference type="GlyCosmos" id="Q8IVL0">
    <property type="glycosylation" value="3 sites, 3 glycans"/>
</dbReference>
<dbReference type="GlyGen" id="Q8IVL0">
    <property type="glycosylation" value="7 sites, 2 N-linked glycans (1 site), 1 O-linked glycan (5 sites)"/>
</dbReference>
<dbReference type="iPTMnet" id="Q8IVL0"/>
<dbReference type="PhosphoSitePlus" id="Q8IVL0"/>
<dbReference type="SwissPalm" id="Q8IVL0"/>
<dbReference type="BioMuta" id="NAV3"/>
<dbReference type="DMDM" id="313104213"/>
<dbReference type="jPOST" id="Q8IVL0"/>
<dbReference type="MassIVE" id="Q8IVL0"/>
<dbReference type="PaxDb" id="9606-ENSP00000381007"/>
<dbReference type="PeptideAtlas" id="Q8IVL0"/>
<dbReference type="ProteomicsDB" id="70721">
    <molecule id="Q8IVL0-1"/>
</dbReference>
<dbReference type="ProteomicsDB" id="70722">
    <molecule id="Q8IVL0-2"/>
</dbReference>
<dbReference type="ProteomicsDB" id="70723">
    <molecule id="Q8IVL0-3"/>
</dbReference>
<dbReference type="Antibodypedia" id="29726">
    <property type="antibodies" value="75 antibodies from 18 providers"/>
</dbReference>
<dbReference type="DNASU" id="89795"/>
<dbReference type="Ensembl" id="ENST00000397909.7">
    <molecule id="Q8IVL0-1"/>
    <property type="protein sequence ID" value="ENSP00000381007.2"/>
    <property type="gene ID" value="ENSG00000067798.16"/>
</dbReference>
<dbReference type="Ensembl" id="ENST00000536525.6">
    <molecule id="Q8IVL0-2"/>
    <property type="protein sequence ID" value="ENSP00000446132.2"/>
    <property type="gene ID" value="ENSG00000067798.16"/>
</dbReference>
<dbReference type="GeneID" id="89795"/>
<dbReference type="KEGG" id="hsa:89795"/>
<dbReference type="MANE-Select" id="ENST00000397909.7">
    <property type="protein sequence ID" value="ENSP00000381007.2"/>
    <property type="RefSeq nucleotide sequence ID" value="NM_001024383.2"/>
    <property type="RefSeq protein sequence ID" value="NP_001019554.1"/>
</dbReference>
<dbReference type="UCSC" id="uc001syo.5">
    <molecule id="Q8IVL0-1"/>
    <property type="organism name" value="human"/>
</dbReference>
<dbReference type="AGR" id="HGNC:15998"/>
<dbReference type="CTD" id="89795"/>
<dbReference type="DisGeNET" id="89795"/>
<dbReference type="GeneCards" id="NAV3"/>
<dbReference type="HGNC" id="HGNC:15998">
    <property type="gene designation" value="NAV3"/>
</dbReference>
<dbReference type="HPA" id="ENSG00000067798">
    <property type="expression patterns" value="Tissue enhanced (brain, ovary)"/>
</dbReference>
<dbReference type="MIM" id="611629">
    <property type="type" value="gene"/>
</dbReference>
<dbReference type="neXtProt" id="NX_Q8IVL0"/>
<dbReference type="OpenTargets" id="ENSG00000067798"/>
<dbReference type="PharmGKB" id="PA31453"/>
<dbReference type="VEuPathDB" id="HostDB:ENSG00000067798"/>
<dbReference type="eggNOG" id="ENOG502QPT3">
    <property type="taxonomic scope" value="Eukaryota"/>
</dbReference>
<dbReference type="GeneTree" id="ENSGT00940000158014"/>
<dbReference type="HOGENOM" id="CLU_001002_1_0_1"/>
<dbReference type="InParanoid" id="Q8IVL0"/>
<dbReference type="OMA" id="TKYPEDP"/>
<dbReference type="OrthoDB" id="2161974at2759"/>
<dbReference type="PAN-GO" id="Q8IVL0">
    <property type="GO annotations" value="1 GO annotation based on evolutionary models"/>
</dbReference>
<dbReference type="PhylomeDB" id="Q8IVL0"/>
<dbReference type="TreeFam" id="TF329881"/>
<dbReference type="PathwayCommons" id="Q8IVL0"/>
<dbReference type="SignaLink" id="Q8IVL0"/>
<dbReference type="BioGRID-ORCS" id="89795">
    <property type="hits" value="5 hits in 1147 CRISPR screens"/>
</dbReference>
<dbReference type="ChiTaRS" id="NAV3">
    <property type="organism name" value="human"/>
</dbReference>
<dbReference type="GenomeRNAi" id="89795"/>
<dbReference type="Pharos" id="Q8IVL0">
    <property type="development level" value="Tbio"/>
</dbReference>
<dbReference type="PRO" id="PR:Q8IVL0"/>
<dbReference type="Proteomes" id="UP000005640">
    <property type="component" value="Chromosome 12"/>
</dbReference>
<dbReference type="RNAct" id="Q8IVL0">
    <property type="molecule type" value="protein"/>
</dbReference>
<dbReference type="Bgee" id="ENSG00000067798">
    <property type="expression patterns" value="Expressed in middle temporal gyrus and 166 other cell types or tissues"/>
</dbReference>
<dbReference type="ExpressionAtlas" id="Q8IVL0">
    <property type="expression patterns" value="baseline and differential"/>
</dbReference>
<dbReference type="GO" id="GO:0005640">
    <property type="term" value="C:nuclear outer membrane"/>
    <property type="evidence" value="ECO:0007669"/>
    <property type="project" value="UniProtKB-SubCell"/>
</dbReference>
<dbReference type="GO" id="GO:0005524">
    <property type="term" value="F:ATP binding"/>
    <property type="evidence" value="ECO:0007669"/>
    <property type="project" value="InterPro"/>
</dbReference>
<dbReference type="GO" id="GO:0016887">
    <property type="term" value="F:ATP hydrolysis activity"/>
    <property type="evidence" value="ECO:0007669"/>
    <property type="project" value="InterPro"/>
</dbReference>
<dbReference type="GO" id="GO:0008017">
    <property type="term" value="F:microtubule binding"/>
    <property type="evidence" value="ECO:0000314"/>
    <property type="project" value="UniProtKB"/>
</dbReference>
<dbReference type="GO" id="GO:0030336">
    <property type="term" value="P:negative regulation of cell migration"/>
    <property type="evidence" value="ECO:0000315"/>
    <property type="project" value="UniProtKB"/>
</dbReference>
<dbReference type="GO" id="GO:0032703">
    <property type="term" value="P:negative regulation of interleukin-2 production"/>
    <property type="evidence" value="ECO:0000315"/>
    <property type="project" value="UniProtKB"/>
</dbReference>
<dbReference type="GO" id="GO:0007026">
    <property type="term" value="P:negative regulation of microtubule depolymerization"/>
    <property type="evidence" value="ECO:0000315"/>
    <property type="project" value="UniProtKB"/>
</dbReference>
<dbReference type="GO" id="GO:0022008">
    <property type="term" value="P:neurogenesis"/>
    <property type="evidence" value="ECO:0007669"/>
    <property type="project" value="InterPro"/>
</dbReference>
<dbReference type="GO" id="GO:0031116">
    <property type="term" value="P:positive regulation of microtubule polymerization"/>
    <property type="evidence" value="ECO:0000315"/>
    <property type="project" value="UniProtKB"/>
</dbReference>
<dbReference type="CDD" id="cd21286">
    <property type="entry name" value="CH_NAV3"/>
    <property type="match status" value="1"/>
</dbReference>
<dbReference type="FunFam" id="1.10.418.10:FF:000018">
    <property type="entry name" value="Neuron navigator 2"/>
    <property type="match status" value="1"/>
</dbReference>
<dbReference type="FunFam" id="3.40.50.300:FF:000316">
    <property type="entry name" value="Putative neuron navigator 3"/>
    <property type="match status" value="1"/>
</dbReference>
<dbReference type="Gene3D" id="1.10.418.10">
    <property type="entry name" value="Calponin-like domain"/>
    <property type="match status" value="1"/>
</dbReference>
<dbReference type="Gene3D" id="3.40.50.300">
    <property type="entry name" value="P-loop containing nucleotide triphosphate hydrolases"/>
    <property type="match status" value="1"/>
</dbReference>
<dbReference type="InterPro" id="IPR003593">
    <property type="entry name" value="AAA+_ATPase"/>
</dbReference>
<dbReference type="InterPro" id="IPR003959">
    <property type="entry name" value="ATPase_AAA_core"/>
</dbReference>
<dbReference type="InterPro" id="IPR001715">
    <property type="entry name" value="CH_dom"/>
</dbReference>
<dbReference type="InterPro" id="IPR036872">
    <property type="entry name" value="CH_dom_sf"/>
</dbReference>
<dbReference type="InterPro" id="IPR039041">
    <property type="entry name" value="Nav/unc-53"/>
</dbReference>
<dbReference type="InterPro" id="IPR027417">
    <property type="entry name" value="P-loop_NTPase"/>
</dbReference>
<dbReference type="PANTHER" id="PTHR12784:SF18">
    <property type="entry name" value="NEURON NAVIGATOR 3"/>
    <property type="match status" value="1"/>
</dbReference>
<dbReference type="PANTHER" id="PTHR12784">
    <property type="entry name" value="STEERIN"/>
    <property type="match status" value="1"/>
</dbReference>
<dbReference type="Pfam" id="PF00004">
    <property type="entry name" value="AAA"/>
    <property type="match status" value="1"/>
</dbReference>
<dbReference type="Pfam" id="PF25408">
    <property type="entry name" value="AAA_lid_NAV1"/>
    <property type="match status" value="1"/>
</dbReference>
<dbReference type="Pfam" id="PF00307">
    <property type="entry name" value="CH"/>
    <property type="match status" value="1"/>
</dbReference>
<dbReference type="Pfam" id="PF23092">
    <property type="entry name" value="Ubiquitin_6"/>
    <property type="match status" value="1"/>
</dbReference>
<dbReference type="SMART" id="SM00382">
    <property type="entry name" value="AAA"/>
    <property type="match status" value="1"/>
</dbReference>
<dbReference type="SMART" id="SM00033">
    <property type="entry name" value="CH"/>
    <property type="match status" value="1"/>
</dbReference>
<dbReference type="SUPFAM" id="SSF47576">
    <property type="entry name" value="Calponin-homology domain, CH-domain"/>
    <property type="match status" value="1"/>
</dbReference>
<dbReference type="SUPFAM" id="SSF52540">
    <property type="entry name" value="P-loop containing nucleoside triphosphate hydrolases"/>
    <property type="match status" value="2"/>
</dbReference>
<dbReference type="PROSITE" id="PS50021">
    <property type="entry name" value="CH"/>
    <property type="match status" value="1"/>
</dbReference>
<accession>Q8IVL0</accession>
<accession>Q8NFW7</accession>
<accession>Q9Y2E7</accession>
<sequence length="2385" mass="255648">MPVLGVASKLRQPAVGSKPVHTALPIPNLGTTGSQHCSSRPLELTETESSMLSCQLALKSTCEFGEKKPLQGKAKEKEDSKIYTDWANHYLAKSGHKRLIKDLQQDIADGVLLAEIIQIIANEKVEDINGCPRSQSQMIENVDVCLSFLAARGVNVQGLSAEEIRNGNLKAILGLFFSLSRYKQQQHHQQQYYQSLVELQQRVTHASPPSEASQAKTQQDMQSSLAARYATQSNHSGIATSQKKPTRLPGPSRVPAAGSSSKVQGASNLNRRSQSFNSIDKNKPPNYANGNEKDSSKGPQSSSGVNGNVQPPSTAGQPPASAIPSPSASKPWRSKSMNVKHSATSTMLTVKQSSTATSPTPSSDRLKPPVSEGVKTAPSGQKSMLEKFKLVNARTALRPPQPPSSGPSDGGKDDDAFSESGEMEGFNSGLNSGGSTNSSPKVSPKLAPPKAGSKNLSNKKSLLQPKEKEEKNRDKNKVCTEKPVKEEKDQVTEMAPKKTSKIASLIPKGSKTTAAKKESLIPSSSGIPKPGSKVPTVKQTISPGSTASKESEKFRTTKGSPSQSLSKPITMEKASASSCPAPLEGREAGQASPSGSCTMTVAQSSGQSTGNGAVQLPQQQQHSHPNTATVAPFIYRAHSENEGTALPSADSCTSPTKMDLSYSKTAKQCLEEISGEDPETRRMRTVKNIADLRQNLEETMSSLRGTQISHSTLETTFDSTVTTEVNGRTIPNLTSRPTPMTWRLGQACPRLQAGDAPSLGAGYPRSGTSRFIHTDPSRFMYTTPLRRAAVSRLGNMSQIDMSEKASSDLDMSSEVDVGGYMSDGDILGKSLRTDDINSGYMTDGGLNLYTRSLNRIPDTATSRDIIQRGVHDVTVDADSWDDSSSVSSGLSDTLDNISTDDLNTTSSVSSYSNITVPSRKNTQLRTDSEKRSTTDETWDSPEELKKPEEDFDSHGDAGGKWKTVSSGLPEDPEKAGQKASLSVSQTGSWRRGMSAQGGAPSRQKAGTSALKTPGKTDDAKASEKGKAPLKGSSLQRSPSDAGKSSGDEGKKPPSGIGRSTATSSFGFKKPSGVGSSAMITSSGATITSGSATLGKIPKSAAIGGKSNAGRKTSLDGSQNQDDVVLHVSSKTTLQYRSLPRPSKSSTSGIPGRGGHRSSTSSIDSNVSSKSAGATTSKLREPTKIGSGRSSPVTVNQTDKEKEKVAVSDSESVSLSGSPKSSPTSASACGAQGLRQPGSKYPDIASPTFRRLFGAKAGGKSASAPNTEGVKSSSVMPSPSTTLARQGSLESPSSGTGSMGSAGGLSGSSSPLFNKPSDLTTDVISLSHSLASSPASVHSFTSGGLVWAANMSSSSAGSKDTPSYQSMTSLHTSSESIDLPLSHHGSLSGLTTGTHEVQSLLMRTGSVRSTLSESMQLDRNTLPKKGLRYTPSSRQANQEEGKEWLRSHSTGGLQDTGNQSPLVSPSAMSSSAAGKYHFSNLVSPTNLSQFNLPGPSMMRSNSIPAQDSSFDLYDDSQLCGSATSLEERPRAISHSGSFRDSMEEVHGSSLSLVSSTSSLYSTAEEKAHSEQIHKLRRELVASQEKVATLTSQLSANAHLVAAFEKSLGNMTGRLQSLTMTAEQKESELIELRETIEMLKAQNSAAQAAIQGALNGPDHPPKDLRIRRQHSSESVSSINSATSHSSIGSGNDADSKKKKKKNWVNSRGSELRSSFKQAFGKKKSTKPPSSHSDIEELTDSSLPASPKLPHNAGDCGSASMKPSQSASASPLVWPPKKRQNGPVIYKHRSRICECTEAEAEIILQLKSELREKELKLTDIRLEALSSAHHLDQIREAMNRMQNEIEILKAENDRLKAETGNTAKPTRPPSESSSSTSSSSSRQSLGLSLNNLNITEAVSSDILLDDAGDATGHKDGRSVKIIVSISKGYGRAKDQKSQAYLIGSIGVSGKTKWDVLDGVIRRLFKEYVFRIDTSTSLGLSSDCIASYCIGDLIRSHNLEVPELLPCGYLVGDNNIITVNLKGVEENSLDSFVFDTLIPKPITQRYFNLLMEHHRIILSGPSGTGKTYLANKLAEYVITKSGRKKTEDAIATFNVDHKSSKELQQYLANLAEQCSADNNGVELPVVIILDNLHHVGSLSDIFNGFLNCKYNKCPYIIGTMNQGVSSSPNLELHHNFRWVLCANHTEPVKGFLGRYLRRKLIEIEIERNIRNNDLVKIIDWIPKTWHHLNSFLETHSSSDVTIGPRLFLPCPMDVEGSRVWFMDLWNYSLVPYILEAVREGLQMYGKRTPWEDPSKWVLDTYPWSSATLPQESPALLQLRPEDVGYESCTSTKEATTSKHIPQTDTEGDPLMNMLMKLQEAANYSSTQSCDSESTSHHEDILDSSLESTL</sequence>
<reference key="1">
    <citation type="journal article" date="2004" name="Brain Res. Dev. Brain Res.">
        <title>Sensory deficits in mice hypomorphic for a mammalian homologue of unc-53.</title>
        <authorList>
            <person name="Peeters P.J."/>
            <person name="Baker A."/>
            <person name="Goris I."/>
            <person name="Daneels G."/>
            <person name="Verhasselt P."/>
            <person name="Luyten W.H.M.L."/>
            <person name="Geysen J.J.G.H."/>
            <person name="Kass S.U."/>
            <person name="Moechars D.W.E."/>
        </authorList>
    </citation>
    <scope>NUCLEOTIDE SEQUENCE [MRNA] (ISOFORM 1)</scope>
    <scope>TISSUE SPECIFICITY</scope>
    <scope>VARIANT ALA-45</scope>
</reference>
<reference key="2">
    <citation type="journal article" date="2006" name="Nature">
        <title>The finished DNA sequence of human chromosome 12.</title>
        <authorList>
            <person name="Scherer S.E."/>
            <person name="Muzny D.M."/>
            <person name="Buhay C.J."/>
            <person name="Chen R."/>
            <person name="Cree A."/>
            <person name="Ding Y."/>
            <person name="Dugan-Rocha S."/>
            <person name="Gill R."/>
            <person name="Gunaratne P."/>
            <person name="Harris R.A."/>
            <person name="Hawes A.C."/>
            <person name="Hernandez J."/>
            <person name="Hodgson A.V."/>
            <person name="Hume J."/>
            <person name="Jackson A."/>
            <person name="Khan Z.M."/>
            <person name="Kovar-Smith C."/>
            <person name="Lewis L.R."/>
            <person name="Lozado R.J."/>
            <person name="Metzker M.L."/>
            <person name="Milosavljevic A."/>
            <person name="Miner G.R."/>
            <person name="Montgomery K.T."/>
            <person name="Morgan M.B."/>
            <person name="Nazareth L.V."/>
            <person name="Scott G."/>
            <person name="Sodergren E."/>
            <person name="Song X.-Z."/>
            <person name="Steffen D."/>
            <person name="Lovering R.C."/>
            <person name="Wheeler D.A."/>
            <person name="Worley K.C."/>
            <person name="Yuan Y."/>
            <person name="Zhang Z."/>
            <person name="Adams C.Q."/>
            <person name="Ansari-Lari M.A."/>
            <person name="Ayele M."/>
            <person name="Brown M.J."/>
            <person name="Chen G."/>
            <person name="Chen Z."/>
            <person name="Clerc-Blankenburg K.P."/>
            <person name="Davis C."/>
            <person name="Delgado O."/>
            <person name="Dinh H.H."/>
            <person name="Draper H."/>
            <person name="Gonzalez-Garay M.L."/>
            <person name="Havlak P."/>
            <person name="Jackson L.R."/>
            <person name="Jacob L.S."/>
            <person name="Kelly S.H."/>
            <person name="Li L."/>
            <person name="Li Z."/>
            <person name="Liu J."/>
            <person name="Liu W."/>
            <person name="Lu J."/>
            <person name="Maheshwari M."/>
            <person name="Nguyen B.-V."/>
            <person name="Okwuonu G.O."/>
            <person name="Pasternak S."/>
            <person name="Perez L.M."/>
            <person name="Plopper F.J.H."/>
            <person name="Santibanez J."/>
            <person name="Shen H."/>
            <person name="Tabor P.E."/>
            <person name="Verduzco D."/>
            <person name="Waldron L."/>
            <person name="Wang Q."/>
            <person name="Williams G.A."/>
            <person name="Zhang J."/>
            <person name="Zhou J."/>
            <person name="Allen C.C."/>
            <person name="Amin A.G."/>
            <person name="Anyalebechi V."/>
            <person name="Bailey M."/>
            <person name="Barbaria J.A."/>
            <person name="Bimage K.E."/>
            <person name="Bryant N.P."/>
            <person name="Burch P.E."/>
            <person name="Burkett C.E."/>
            <person name="Burrell K.L."/>
            <person name="Calderon E."/>
            <person name="Cardenas V."/>
            <person name="Carter K."/>
            <person name="Casias K."/>
            <person name="Cavazos I."/>
            <person name="Cavazos S.R."/>
            <person name="Ceasar H."/>
            <person name="Chacko J."/>
            <person name="Chan S.N."/>
            <person name="Chavez D."/>
            <person name="Christopoulos C."/>
            <person name="Chu J."/>
            <person name="Cockrell R."/>
            <person name="Cox C.D."/>
            <person name="Dang M."/>
            <person name="Dathorne S.R."/>
            <person name="David R."/>
            <person name="Davis C.M."/>
            <person name="Davy-Carroll L."/>
            <person name="Deshazo D.R."/>
            <person name="Donlin J.E."/>
            <person name="D'Souza L."/>
            <person name="Eaves K.A."/>
            <person name="Egan A."/>
            <person name="Emery-Cohen A.J."/>
            <person name="Escotto M."/>
            <person name="Flagg N."/>
            <person name="Forbes L.D."/>
            <person name="Gabisi A.M."/>
            <person name="Garza M."/>
            <person name="Hamilton C."/>
            <person name="Henderson N."/>
            <person name="Hernandez O."/>
            <person name="Hines S."/>
            <person name="Hogues M.E."/>
            <person name="Huang M."/>
            <person name="Idlebird D.G."/>
            <person name="Johnson R."/>
            <person name="Jolivet A."/>
            <person name="Jones S."/>
            <person name="Kagan R."/>
            <person name="King L.M."/>
            <person name="Leal B."/>
            <person name="Lebow H."/>
            <person name="Lee S."/>
            <person name="LeVan J.M."/>
            <person name="Lewis L.C."/>
            <person name="London P."/>
            <person name="Lorensuhewa L.M."/>
            <person name="Loulseged H."/>
            <person name="Lovett D.A."/>
            <person name="Lucier A."/>
            <person name="Lucier R.L."/>
            <person name="Ma J."/>
            <person name="Madu R.C."/>
            <person name="Mapua P."/>
            <person name="Martindale A.D."/>
            <person name="Martinez E."/>
            <person name="Massey E."/>
            <person name="Mawhiney S."/>
            <person name="Meador M.G."/>
            <person name="Mendez S."/>
            <person name="Mercado C."/>
            <person name="Mercado I.C."/>
            <person name="Merritt C.E."/>
            <person name="Miner Z.L."/>
            <person name="Minja E."/>
            <person name="Mitchell T."/>
            <person name="Mohabbat F."/>
            <person name="Mohabbat K."/>
            <person name="Montgomery B."/>
            <person name="Moore N."/>
            <person name="Morris S."/>
            <person name="Munidasa M."/>
            <person name="Ngo R.N."/>
            <person name="Nguyen N.B."/>
            <person name="Nickerson E."/>
            <person name="Nwaokelemeh O.O."/>
            <person name="Nwokenkwo S."/>
            <person name="Obregon M."/>
            <person name="Oguh M."/>
            <person name="Oragunye N."/>
            <person name="Oviedo R.J."/>
            <person name="Parish B.J."/>
            <person name="Parker D.N."/>
            <person name="Parrish J."/>
            <person name="Parks K.L."/>
            <person name="Paul H.A."/>
            <person name="Payton B.A."/>
            <person name="Perez A."/>
            <person name="Perrin W."/>
            <person name="Pickens A."/>
            <person name="Primus E.L."/>
            <person name="Pu L.-L."/>
            <person name="Puazo M."/>
            <person name="Quiles M.M."/>
            <person name="Quiroz J.B."/>
            <person name="Rabata D."/>
            <person name="Reeves K."/>
            <person name="Ruiz S.J."/>
            <person name="Shao H."/>
            <person name="Sisson I."/>
            <person name="Sonaike T."/>
            <person name="Sorelle R.P."/>
            <person name="Sutton A.E."/>
            <person name="Svatek A.F."/>
            <person name="Svetz L.A."/>
            <person name="Tamerisa K.S."/>
            <person name="Taylor T.R."/>
            <person name="Teague B."/>
            <person name="Thomas N."/>
            <person name="Thorn R.D."/>
            <person name="Trejos Z.Y."/>
            <person name="Trevino B.K."/>
            <person name="Ukegbu O.N."/>
            <person name="Urban J.B."/>
            <person name="Vasquez L.I."/>
            <person name="Vera V.A."/>
            <person name="Villasana D.M."/>
            <person name="Wang L."/>
            <person name="Ward-Moore S."/>
            <person name="Warren J.T."/>
            <person name="Wei X."/>
            <person name="White F."/>
            <person name="Williamson A.L."/>
            <person name="Wleczyk R."/>
            <person name="Wooden H.S."/>
            <person name="Wooden S.H."/>
            <person name="Yen J."/>
            <person name="Yoon L."/>
            <person name="Yoon V."/>
            <person name="Zorrilla S.E."/>
            <person name="Nelson D."/>
            <person name="Kucherlapati R."/>
            <person name="Weinstock G."/>
            <person name="Gibbs R.A."/>
        </authorList>
    </citation>
    <scope>NUCLEOTIDE SEQUENCE [LARGE SCALE GENOMIC DNA]</scope>
</reference>
<reference key="3">
    <citation type="journal article" date="2002" name="Genomics">
        <title>Neuron navigator: a human gene family with homology to unc-53, a cell guidance gene from Caenorhabditis elegans.</title>
        <authorList>
            <person name="Maes T."/>
            <person name="Barcelo A."/>
            <person name="Buesa C."/>
        </authorList>
    </citation>
    <scope>NUCLEOTIDE SEQUENCE [MRNA] OF 82-2385 (ISOFORM 2)</scope>
    <scope>TISSUE SPECIFICITY</scope>
</reference>
<reference key="4">
    <citation type="journal article" date="1999" name="DNA Res.">
        <title>Prediction of the coding sequences of unidentified human genes. XIII. The complete sequences of 100 new cDNA clones from brain which code for large proteins in vitro.</title>
        <authorList>
            <person name="Nagase T."/>
            <person name="Ishikawa K."/>
            <person name="Suyama M."/>
            <person name="Kikuno R."/>
            <person name="Hirosawa M."/>
            <person name="Miyajima N."/>
            <person name="Tanaka A."/>
            <person name="Kotani H."/>
            <person name="Nomura N."/>
            <person name="Ohara O."/>
        </authorList>
    </citation>
    <scope>NUCLEOTIDE SEQUENCE [LARGE SCALE MRNA] OF 930-2385 (ISOFORM 3)</scope>
    <source>
        <tissue>Brain</tissue>
    </source>
</reference>
<reference key="5">
    <citation type="journal article" date="2002" name="Gene">
        <title>Pore membrane and/or filament interacting like protein 1 (POMFIL1) is predominantly expressed in the nervous system and encodes different protein isoforms.</title>
        <authorList>
            <person name="Coy J.F."/>
            <person name="Wiemann S."/>
            <person name="Bechmann I."/>
            <person name="Baechner D."/>
            <person name="Nitsch R."/>
            <person name="Kretz O."/>
            <person name="Christiansen H."/>
            <person name="Poustka A."/>
        </authorList>
    </citation>
    <scope>IDENTIFICATION</scope>
    <scope>TISSUE SPECIFICITY</scope>
    <scope>DEVELOPMENTAL STAGE</scope>
</reference>
<reference key="6">
    <citation type="journal article" date="2005" name="Cancer Res.">
        <title>Primary cutaneous T-cell lymphomas show a deletion or translocation affecting NAV3, the human UNC-53 homologue.</title>
        <authorList>
            <person name="Karenko L."/>
            <person name="Hahtola S."/>
            <person name="Paeivinen S."/>
            <person name="Karhu R."/>
            <person name="Syrjae S."/>
            <person name="Kaehkoenen M."/>
            <person name="Nedoszytko B."/>
            <person name="Kytoelae S."/>
            <person name="Zhou Y."/>
            <person name="Blazevic V."/>
            <person name="Pesonen M."/>
            <person name="Nevala H."/>
            <person name="Nupponen N."/>
            <person name="Sihto H."/>
            <person name="Krebs I."/>
            <person name="Poustka A."/>
            <person name="Roszkiewicz J."/>
            <person name="Saksela K."/>
            <person name="Peterson P."/>
            <person name="Visakorpi T."/>
            <person name="Ranki A."/>
        </authorList>
    </citation>
    <scope>CHROMOSOMAL TRANSLOCATION</scope>
    <scope>VARIANT LYS-2200</scope>
    <scope>TISSUE SPECIFICITY</scope>
    <scope>FUNCTION</scope>
</reference>
<reference key="7">
    <citation type="journal article" date="2011" name="Development">
        <title>Neuron navigator 3a regulates liver organogenesis during zebrafish embryogenesis.</title>
        <authorList>
            <person name="Klein C."/>
            <person name="Mikutta J."/>
            <person name="Krueger J."/>
            <person name="Scholz K."/>
            <person name="Brinkmann J."/>
            <person name="Liu D."/>
            <person name="Veerkamp J."/>
            <person name="Siegel D."/>
            <person name="Abdelilah-Seyfried S."/>
            <person name="le Noble F."/>
        </authorList>
    </citation>
    <scope>FUNCTION</scope>
</reference>
<reference key="8">
    <citation type="journal article" date="2011" name="Sci. Signal.">
        <title>System-wide temporal characterization of the proteome and phosphoproteome of human embryonic stem cell differentiation.</title>
        <authorList>
            <person name="Rigbolt K.T."/>
            <person name="Prokhorova T.A."/>
            <person name="Akimov V."/>
            <person name="Henningsen J."/>
            <person name="Johansen P.T."/>
            <person name="Kratchmarova I."/>
            <person name="Kassem M."/>
            <person name="Mann M."/>
            <person name="Olsen J.V."/>
            <person name="Blagoev B."/>
        </authorList>
    </citation>
    <scope>PHOSPHORYLATION [LARGE SCALE ANALYSIS] AT SER-1459 AND SER-1463</scope>
    <scope>IDENTIFICATION BY MASS SPECTROMETRY [LARGE SCALE ANALYSIS]</scope>
</reference>
<gene>
    <name type="primary">NAV3</name>
    <name type="synonym">KIAA0938</name>
    <name type="synonym">POMFIL1</name>
    <name type="synonym">STEERIN3</name>
</gene>
<keyword id="KW-0025">Alternative splicing</keyword>
<keyword id="KW-0160">Chromosomal rearrangement</keyword>
<keyword id="KW-0175">Coiled coil</keyword>
<keyword id="KW-0472">Membrane</keyword>
<keyword id="KW-0539">Nucleus</keyword>
<keyword id="KW-0597">Phosphoprotein</keyword>
<keyword id="KW-1267">Proteomics identification</keyword>
<keyword id="KW-1185">Reference proteome</keyword>
<evidence type="ECO:0000250" key="1">
    <source>
        <dbReference type="UniProtKB" id="Q80TN7"/>
    </source>
</evidence>
<evidence type="ECO:0000255" key="2"/>
<evidence type="ECO:0000255" key="3">
    <source>
        <dbReference type="PROSITE-ProRule" id="PRU00044"/>
    </source>
</evidence>
<evidence type="ECO:0000256" key="4">
    <source>
        <dbReference type="SAM" id="MobiDB-lite"/>
    </source>
</evidence>
<evidence type="ECO:0000269" key="5">
    <source>
    </source>
</evidence>
<evidence type="ECO:0000269" key="6">
    <source>
    </source>
</evidence>
<evidence type="ECO:0000269" key="7">
    <source>
    </source>
</evidence>
<evidence type="ECO:0000269" key="8">
    <source>
    </source>
</evidence>
<evidence type="ECO:0000269" key="9">
    <source>
    </source>
</evidence>
<evidence type="ECO:0000303" key="10">
    <source>
    </source>
</evidence>
<evidence type="ECO:0000303" key="11">
    <source>
    </source>
</evidence>
<evidence type="ECO:0000305" key="12"/>
<evidence type="ECO:0007744" key="13">
    <source>
    </source>
</evidence>
<organism>
    <name type="scientific">Homo sapiens</name>
    <name type="common">Human</name>
    <dbReference type="NCBI Taxonomy" id="9606"/>
    <lineage>
        <taxon>Eukaryota</taxon>
        <taxon>Metazoa</taxon>
        <taxon>Chordata</taxon>
        <taxon>Craniata</taxon>
        <taxon>Vertebrata</taxon>
        <taxon>Euteleostomi</taxon>
        <taxon>Mammalia</taxon>
        <taxon>Eutheria</taxon>
        <taxon>Euarchontoglires</taxon>
        <taxon>Primates</taxon>
        <taxon>Haplorrhini</taxon>
        <taxon>Catarrhini</taxon>
        <taxon>Hominidae</taxon>
        <taxon>Homo</taxon>
    </lineage>
</organism>
<protein>
    <recommendedName>
        <fullName>Neuron navigator 3</fullName>
    </recommendedName>
    <alternativeName>
        <fullName>Pore membrane and/or filament-interacting-like protein 1</fullName>
    </alternativeName>
    <alternativeName>
        <fullName>Steerin-3</fullName>
    </alternativeName>
    <alternativeName>
        <fullName>Unc-53 homolog 3</fullName>
        <shortName>unc53H3</shortName>
    </alternativeName>
</protein>